<gene>
    <name type="primary">lpl8</name>
    <name type="ordered locus">SA0404</name>
</gene>
<organism>
    <name type="scientific">Staphylococcus aureus (strain N315)</name>
    <dbReference type="NCBI Taxonomy" id="158879"/>
    <lineage>
        <taxon>Bacteria</taxon>
        <taxon>Bacillati</taxon>
        <taxon>Bacillota</taxon>
        <taxon>Bacilli</taxon>
        <taxon>Bacillales</taxon>
        <taxon>Staphylococcaceae</taxon>
        <taxon>Staphylococcus</taxon>
    </lineage>
</organism>
<protein>
    <recommendedName>
        <fullName>Uncharacterized lipoprotein SA0404</fullName>
    </recommendedName>
</protein>
<reference key="1">
    <citation type="journal article" date="2001" name="Lancet">
        <title>Whole genome sequencing of meticillin-resistant Staphylococcus aureus.</title>
        <authorList>
            <person name="Kuroda M."/>
            <person name="Ohta T."/>
            <person name="Uchiyama I."/>
            <person name="Baba T."/>
            <person name="Yuzawa H."/>
            <person name="Kobayashi I."/>
            <person name="Cui L."/>
            <person name="Oguchi A."/>
            <person name="Aoki K."/>
            <person name="Nagai Y."/>
            <person name="Lian J.-Q."/>
            <person name="Ito T."/>
            <person name="Kanamori M."/>
            <person name="Matsumaru H."/>
            <person name="Maruyama A."/>
            <person name="Murakami H."/>
            <person name="Hosoyama A."/>
            <person name="Mizutani-Ui Y."/>
            <person name="Takahashi N.K."/>
            <person name="Sawano T."/>
            <person name="Inoue R."/>
            <person name="Kaito C."/>
            <person name="Sekimizu K."/>
            <person name="Hirakawa H."/>
            <person name="Kuhara S."/>
            <person name="Goto S."/>
            <person name="Yabuzaki J."/>
            <person name="Kanehisa M."/>
            <person name="Yamashita A."/>
            <person name="Oshima K."/>
            <person name="Furuya K."/>
            <person name="Yoshino C."/>
            <person name="Shiba T."/>
            <person name="Hattori M."/>
            <person name="Ogasawara N."/>
            <person name="Hayashi H."/>
            <person name="Hiramatsu K."/>
        </authorList>
    </citation>
    <scope>NUCLEOTIDE SEQUENCE [LARGE SCALE GENOMIC DNA]</scope>
    <source>
        <strain>N315</strain>
    </source>
</reference>
<feature type="signal peptide" evidence="1">
    <location>
        <begin position="1"/>
        <end position="22"/>
    </location>
</feature>
<feature type="chain" id="PRO_0000278533" description="Uncharacterized lipoprotein SA0404">
    <location>
        <begin position="23"/>
        <end position="260"/>
    </location>
</feature>
<feature type="lipid moiety-binding region" description="N-palmitoyl cysteine" evidence="1">
    <location>
        <position position="23"/>
    </location>
</feature>
<feature type="lipid moiety-binding region" description="S-diacylglycerol cysteine" evidence="1">
    <location>
        <position position="23"/>
    </location>
</feature>
<evidence type="ECO:0000255" key="1">
    <source>
        <dbReference type="PROSITE-ProRule" id="PRU00303"/>
    </source>
</evidence>
<evidence type="ECO:0000305" key="2"/>
<accession>Q7A7F9</accession>
<proteinExistence type="inferred from homology"/>
<dbReference type="EMBL" id="BA000018">
    <property type="protein sequence ID" value="BAB41633.1"/>
    <property type="molecule type" value="Genomic_DNA"/>
</dbReference>
<dbReference type="PIR" id="F89809">
    <property type="entry name" value="F89809"/>
</dbReference>
<dbReference type="RefSeq" id="WP_000835971.1">
    <property type="nucleotide sequence ID" value="NC_002745.2"/>
</dbReference>
<dbReference type="SMR" id="Q7A7F9"/>
<dbReference type="EnsemblBacteria" id="BAB41633">
    <property type="protein sequence ID" value="BAB41633"/>
    <property type="gene ID" value="BAB41633"/>
</dbReference>
<dbReference type="KEGG" id="sau:SA0404"/>
<dbReference type="HOGENOM" id="CLU_071589_0_1_9"/>
<dbReference type="GO" id="GO:0005886">
    <property type="term" value="C:plasma membrane"/>
    <property type="evidence" value="ECO:0007669"/>
    <property type="project" value="UniProtKB-SubCell"/>
</dbReference>
<dbReference type="Gene3D" id="2.50.20.40">
    <property type="match status" value="1"/>
</dbReference>
<dbReference type="InterPro" id="IPR007595">
    <property type="entry name" value="Csa"/>
</dbReference>
<dbReference type="InterPro" id="IPR038641">
    <property type="entry name" value="Csa_sf"/>
</dbReference>
<dbReference type="NCBIfam" id="TIGR01742">
    <property type="entry name" value="SA_tandem_lipo"/>
    <property type="match status" value="1"/>
</dbReference>
<dbReference type="Pfam" id="PF04507">
    <property type="entry name" value="DUF576"/>
    <property type="match status" value="1"/>
</dbReference>
<dbReference type="PROSITE" id="PS51257">
    <property type="entry name" value="PROKAR_LIPOPROTEIN"/>
    <property type="match status" value="1"/>
</dbReference>
<sequence length="260" mass="30311">MKSIKRIGLCISLLILIIFATSCGSNKITGDSKEEQIKKSFAKSLDKYPTENLEEFYDKEGYRDGEFEKDDKGTWLIRSEMKIQLKGENLESRGAVIEINRNTRTAKGNYIVREVVEDSDGMTHNHTKRYPVKMENNKMIPLKSIDDEKVKKEIEEFKFFVQYGNFKELENYKEDEVSYNPEVPIYSAQYQLKNSDYNVEQLRKRYNIPTQKAPKLLLKGSGNLKGSSVGYKNIEFTFVENKEENIYFTDSVYFNPSEDK</sequence>
<keyword id="KW-1003">Cell membrane</keyword>
<keyword id="KW-0449">Lipoprotein</keyword>
<keyword id="KW-0472">Membrane</keyword>
<keyword id="KW-0564">Palmitate</keyword>
<keyword id="KW-0732">Signal</keyword>
<comment type="subcellular location">
    <subcellularLocation>
        <location evidence="1">Cell membrane</location>
        <topology evidence="1">Lipid-anchor</topology>
    </subcellularLocation>
</comment>
<comment type="similarity">
    <text evidence="2">Belongs to the staphylococcal tandem lipoprotein family.</text>
</comment>
<name>Y404_STAAN</name>